<evidence type="ECO:0000255" key="1">
    <source>
        <dbReference type="HAMAP-Rule" id="MF_00158"/>
    </source>
</evidence>
<name>PANC_BUCAI</name>
<keyword id="KW-0067">ATP-binding</keyword>
<keyword id="KW-0963">Cytoplasm</keyword>
<keyword id="KW-0436">Ligase</keyword>
<keyword id="KW-0547">Nucleotide-binding</keyword>
<keyword id="KW-0566">Pantothenate biosynthesis</keyword>
<keyword id="KW-1185">Reference proteome</keyword>
<comment type="function">
    <text evidence="1">Catalyzes the condensation of pantoate with beta-alanine in an ATP-dependent reaction via a pantoyl-adenylate intermediate.</text>
</comment>
<comment type="catalytic activity">
    <reaction evidence="1">
        <text>(R)-pantoate + beta-alanine + ATP = (R)-pantothenate + AMP + diphosphate + H(+)</text>
        <dbReference type="Rhea" id="RHEA:10912"/>
        <dbReference type="ChEBI" id="CHEBI:15378"/>
        <dbReference type="ChEBI" id="CHEBI:15980"/>
        <dbReference type="ChEBI" id="CHEBI:29032"/>
        <dbReference type="ChEBI" id="CHEBI:30616"/>
        <dbReference type="ChEBI" id="CHEBI:33019"/>
        <dbReference type="ChEBI" id="CHEBI:57966"/>
        <dbReference type="ChEBI" id="CHEBI:456215"/>
        <dbReference type="EC" id="6.3.2.1"/>
    </reaction>
</comment>
<comment type="pathway">
    <text evidence="1">Cofactor biosynthesis; (R)-pantothenate biosynthesis; (R)-pantothenate from (R)-pantoate and beta-alanine: step 1/1.</text>
</comment>
<comment type="subunit">
    <text evidence="1">Homodimer.</text>
</comment>
<comment type="subcellular location">
    <subcellularLocation>
        <location evidence="1">Cytoplasm</location>
    </subcellularLocation>
</comment>
<comment type="miscellaneous">
    <text evidence="1">The reaction proceeds by a bi uni uni bi ping pong mechanism.</text>
</comment>
<comment type="similarity">
    <text evidence="1">Belongs to the pantothenate synthetase family.</text>
</comment>
<feature type="chain" id="PRO_0000128212" description="Pantothenate synthetase">
    <location>
        <begin position="1"/>
        <end position="285"/>
    </location>
</feature>
<feature type="active site" description="Proton donor" evidence="1">
    <location>
        <position position="37"/>
    </location>
</feature>
<feature type="binding site" evidence="1">
    <location>
        <begin position="30"/>
        <end position="37"/>
    </location>
    <ligand>
        <name>ATP</name>
        <dbReference type="ChEBI" id="CHEBI:30616"/>
    </ligand>
</feature>
<feature type="binding site" evidence="1">
    <location>
        <position position="61"/>
    </location>
    <ligand>
        <name>(R)-pantoate</name>
        <dbReference type="ChEBI" id="CHEBI:15980"/>
    </ligand>
</feature>
<feature type="binding site" evidence="1">
    <location>
        <position position="61"/>
    </location>
    <ligand>
        <name>beta-alanine</name>
        <dbReference type="ChEBI" id="CHEBI:57966"/>
    </ligand>
</feature>
<feature type="binding site" evidence="1">
    <location>
        <begin position="149"/>
        <end position="152"/>
    </location>
    <ligand>
        <name>ATP</name>
        <dbReference type="ChEBI" id="CHEBI:30616"/>
    </ligand>
</feature>
<feature type="binding site" evidence="1">
    <location>
        <position position="155"/>
    </location>
    <ligand>
        <name>(R)-pantoate</name>
        <dbReference type="ChEBI" id="CHEBI:15980"/>
    </ligand>
</feature>
<feature type="binding site" evidence="1">
    <location>
        <position position="178"/>
    </location>
    <ligand>
        <name>ATP</name>
        <dbReference type="ChEBI" id="CHEBI:30616"/>
    </ligand>
</feature>
<feature type="binding site" evidence="1">
    <location>
        <begin position="186"/>
        <end position="189"/>
    </location>
    <ligand>
        <name>ATP</name>
        <dbReference type="ChEBI" id="CHEBI:30616"/>
    </ligand>
</feature>
<dbReference type="EC" id="6.3.2.1" evidence="1"/>
<dbReference type="EMBL" id="BA000003">
    <property type="protein sequence ID" value="BAB12913.1"/>
    <property type="molecule type" value="Genomic_DNA"/>
</dbReference>
<dbReference type="RefSeq" id="NP_240027.1">
    <property type="nucleotide sequence ID" value="NC_002528.1"/>
</dbReference>
<dbReference type="RefSeq" id="WP_009874153.1">
    <property type="nucleotide sequence ID" value="NC_002528.1"/>
</dbReference>
<dbReference type="SMR" id="P57292"/>
<dbReference type="STRING" id="563178.BUAP5A_193"/>
<dbReference type="EnsemblBacteria" id="BAB12913">
    <property type="protein sequence ID" value="BAB12913"/>
    <property type="gene ID" value="BAB12913"/>
</dbReference>
<dbReference type="KEGG" id="buc:BU196"/>
<dbReference type="PATRIC" id="fig|107806.10.peg.207"/>
<dbReference type="eggNOG" id="COG0414">
    <property type="taxonomic scope" value="Bacteria"/>
</dbReference>
<dbReference type="HOGENOM" id="CLU_047148_0_0_6"/>
<dbReference type="UniPathway" id="UPA00028">
    <property type="reaction ID" value="UER00005"/>
</dbReference>
<dbReference type="Proteomes" id="UP000001806">
    <property type="component" value="Chromosome"/>
</dbReference>
<dbReference type="GO" id="GO:0005829">
    <property type="term" value="C:cytosol"/>
    <property type="evidence" value="ECO:0007669"/>
    <property type="project" value="TreeGrafter"/>
</dbReference>
<dbReference type="GO" id="GO:0005524">
    <property type="term" value="F:ATP binding"/>
    <property type="evidence" value="ECO:0007669"/>
    <property type="project" value="UniProtKB-KW"/>
</dbReference>
<dbReference type="GO" id="GO:0004592">
    <property type="term" value="F:pantoate-beta-alanine ligase activity"/>
    <property type="evidence" value="ECO:0007669"/>
    <property type="project" value="UniProtKB-UniRule"/>
</dbReference>
<dbReference type="GO" id="GO:0015940">
    <property type="term" value="P:pantothenate biosynthetic process"/>
    <property type="evidence" value="ECO:0007669"/>
    <property type="project" value="UniProtKB-UniRule"/>
</dbReference>
<dbReference type="CDD" id="cd00560">
    <property type="entry name" value="PanC"/>
    <property type="match status" value="1"/>
</dbReference>
<dbReference type="FunFam" id="3.40.50.620:FF:000013">
    <property type="entry name" value="Pantothenate synthetase"/>
    <property type="match status" value="1"/>
</dbReference>
<dbReference type="Gene3D" id="3.40.50.620">
    <property type="entry name" value="HUPs"/>
    <property type="match status" value="1"/>
</dbReference>
<dbReference type="Gene3D" id="3.30.1300.10">
    <property type="entry name" value="Pantoate-beta-alanine ligase, C-terminal domain"/>
    <property type="match status" value="1"/>
</dbReference>
<dbReference type="HAMAP" id="MF_00158">
    <property type="entry name" value="PanC"/>
    <property type="match status" value="1"/>
</dbReference>
<dbReference type="InterPro" id="IPR003721">
    <property type="entry name" value="Pantoate_ligase"/>
</dbReference>
<dbReference type="InterPro" id="IPR042176">
    <property type="entry name" value="Pantoate_ligase_C"/>
</dbReference>
<dbReference type="InterPro" id="IPR014729">
    <property type="entry name" value="Rossmann-like_a/b/a_fold"/>
</dbReference>
<dbReference type="NCBIfam" id="TIGR00018">
    <property type="entry name" value="panC"/>
    <property type="match status" value="1"/>
</dbReference>
<dbReference type="PANTHER" id="PTHR21299">
    <property type="entry name" value="CYTIDYLATE KINASE/PANTOATE-BETA-ALANINE LIGASE"/>
    <property type="match status" value="1"/>
</dbReference>
<dbReference type="PANTHER" id="PTHR21299:SF1">
    <property type="entry name" value="PANTOATE--BETA-ALANINE LIGASE"/>
    <property type="match status" value="1"/>
</dbReference>
<dbReference type="Pfam" id="PF02569">
    <property type="entry name" value="Pantoate_ligase"/>
    <property type="match status" value="1"/>
</dbReference>
<dbReference type="SUPFAM" id="SSF52374">
    <property type="entry name" value="Nucleotidylyl transferase"/>
    <property type="match status" value="1"/>
</dbReference>
<reference key="1">
    <citation type="journal article" date="2000" name="Nature">
        <title>Genome sequence of the endocellular bacterial symbiont of aphids Buchnera sp. APS.</title>
        <authorList>
            <person name="Shigenobu S."/>
            <person name="Watanabe H."/>
            <person name="Hattori M."/>
            <person name="Sakaki Y."/>
            <person name="Ishikawa H."/>
        </authorList>
    </citation>
    <scope>NUCLEOTIDE SEQUENCE [LARGE SCALE GENOMIC DNA]</scope>
    <source>
        <strain>APS</strain>
    </source>
</reference>
<organism>
    <name type="scientific">Buchnera aphidicola subsp. Acyrthosiphon pisum (strain APS)</name>
    <name type="common">Acyrthosiphon pisum symbiotic bacterium</name>
    <dbReference type="NCBI Taxonomy" id="107806"/>
    <lineage>
        <taxon>Bacteria</taxon>
        <taxon>Pseudomonadati</taxon>
        <taxon>Pseudomonadota</taxon>
        <taxon>Gammaproteobacteria</taxon>
        <taxon>Enterobacterales</taxon>
        <taxon>Erwiniaceae</taxon>
        <taxon>Buchnera</taxon>
    </lineage>
</organism>
<gene>
    <name evidence="1" type="primary">panC</name>
    <name type="ordered locus">BU196</name>
</gene>
<proteinExistence type="inferred from homology"/>
<sequence>MHIIKTIKVLYKEIKILKKSNKKIGLVPTMGNLHDGHIKLILLAKKYSDIIIVSIFINPMQFDNLSDLKNYPKTFMKDSIILKKYHVDILFFPHINEIYPNGIEHQTFVEVIKLSKILEGQSRPGHFRGVTTIITKLFNFIQPDFAFFGEKDYQQLLIIKILVKELNYMIKIISLPTIRLKNGLALSSRNNYLSSQENEIAPYLYKIIKKTCEKIIKEDDNIRPKIIHESKILLIKKGFSVDIFDIYDYKNLEHPSKKVKKVILLASVWLGNTRLIDNKKIILNY</sequence>
<accession>P57292</accession>
<protein>
    <recommendedName>
        <fullName evidence="1">Pantothenate synthetase</fullName>
        <shortName evidence="1">PS</shortName>
        <ecNumber evidence="1">6.3.2.1</ecNumber>
    </recommendedName>
    <alternativeName>
        <fullName evidence="1">Pantoate--beta-alanine ligase</fullName>
    </alternativeName>
    <alternativeName>
        <fullName evidence="1">Pantoate-activating enzyme</fullName>
    </alternativeName>
</protein>